<accession>Q03MR4</accession>
<gene>
    <name evidence="1" type="primary">truA</name>
    <name type="ordered locus">STER_0165</name>
</gene>
<name>TRUA_STRTD</name>
<sequence>MVRYKATISYDGTLFSGFQRQPNARSIQEEIEKTLLRLNSGIPVTVHGAGRTDAGVHAYGQVIHFDLPQERDPEKLRFGLDTQCPDDIDIVSIELVSEEFHARYSKHIKTYEFLVDAGRPKNPMMRNYAIHYPYPLSLALMQEAAMELVGTHDFTGFTASGTSVENKVRTITQASVSIDEKTGFYVFAFSGNGFLYKQVRNMVGTLLKIGNGRMPVSQAKTVLESRDRNLAGPTVAGNGLYLKEIRYE</sequence>
<reference key="1">
    <citation type="journal article" date="2006" name="Proc. Natl. Acad. Sci. U.S.A.">
        <title>Comparative genomics of the lactic acid bacteria.</title>
        <authorList>
            <person name="Makarova K.S."/>
            <person name="Slesarev A."/>
            <person name="Wolf Y.I."/>
            <person name="Sorokin A."/>
            <person name="Mirkin B."/>
            <person name="Koonin E.V."/>
            <person name="Pavlov A."/>
            <person name="Pavlova N."/>
            <person name="Karamychev V."/>
            <person name="Polouchine N."/>
            <person name="Shakhova V."/>
            <person name="Grigoriev I."/>
            <person name="Lou Y."/>
            <person name="Rohksar D."/>
            <person name="Lucas S."/>
            <person name="Huang K."/>
            <person name="Goodstein D.M."/>
            <person name="Hawkins T."/>
            <person name="Plengvidhya V."/>
            <person name="Welker D."/>
            <person name="Hughes J."/>
            <person name="Goh Y."/>
            <person name="Benson A."/>
            <person name="Baldwin K."/>
            <person name="Lee J.-H."/>
            <person name="Diaz-Muniz I."/>
            <person name="Dosti B."/>
            <person name="Smeianov V."/>
            <person name="Wechter W."/>
            <person name="Barabote R."/>
            <person name="Lorca G."/>
            <person name="Altermann E."/>
            <person name="Barrangou R."/>
            <person name="Ganesan B."/>
            <person name="Xie Y."/>
            <person name="Rawsthorne H."/>
            <person name="Tamir D."/>
            <person name="Parker C."/>
            <person name="Breidt F."/>
            <person name="Broadbent J.R."/>
            <person name="Hutkins R."/>
            <person name="O'Sullivan D."/>
            <person name="Steele J."/>
            <person name="Unlu G."/>
            <person name="Saier M.H. Jr."/>
            <person name="Klaenhammer T."/>
            <person name="Richardson P."/>
            <person name="Kozyavkin S."/>
            <person name="Weimer B.C."/>
            <person name="Mills D.A."/>
        </authorList>
    </citation>
    <scope>NUCLEOTIDE SEQUENCE [LARGE SCALE GENOMIC DNA]</scope>
    <source>
        <strain>ATCC BAA-491 / LMD-9</strain>
    </source>
</reference>
<comment type="function">
    <text evidence="1">Formation of pseudouridine at positions 38, 39 and 40 in the anticodon stem and loop of transfer RNAs.</text>
</comment>
<comment type="catalytic activity">
    <reaction evidence="1">
        <text>uridine(38/39/40) in tRNA = pseudouridine(38/39/40) in tRNA</text>
        <dbReference type="Rhea" id="RHEA:22376"/>
        <dbReference type="Rhea" id="RHEA-COMP:10085"/>
        <dbReference type="Rhea" id="RHEA-COMP:10087"/>
        <dbReference type="ChEBI" id="CHEBI:65314"/>
        <dbReference type="ChEBI" id="CHEBI:65315"/>
        <dbReference type="EC" id="5.4.99.12"/>
    </reaction>
</comment>
<comment type="subunit">
    <text evidence="1">Homodimer.</text>
</comment>
<comment type="similarity">
    <text evidence="1">Belongs to the tRNA pseudouridine synthase TruA family.</text>
</comment>
<evidence type="ECO:0000255" key="1">
    <source>
        <dbReference type="HAMAP-Rule" id="MF_00171"/>
    </source>
</evidence>
<dbReference type="EC" id="5.4.99.12" evidence="1"/>
<dbReference type="EMBL" id="CP000419">
    <property type="protein sequence ID" value="ABJ65508.1"/>
    <property type="molecule type" value="Genomic_DNA"/>
</dbReference>
<dbReference type="RefSeq" id="WP_011680650.1">
    <property type="nucleotide sequence ID" value="NC_008532.1"/>
</dbReference>
<dbReference type="SMR" id="Q03MR4"/>
<dbReference type="KEGG" id="ste:STER_0165"/>
<dbReference type="HOGENOM" id="CLU_014673_0_1_9"/>
<dbReference type="GO" id="GO:0003723">
    <property type="term" value="F:RNA binding"/>
    <property type="evidence" value="ECO:0007669"/>
    <property type="project" value="InterPro"/>
</dbReference>
<dbReference type="GO" id="GO:0160147">
    <property type="term" value="F:tRNA pseudouridine(38-40) synthase activity"/>
    <property type="evidence" value="ECO:0007669"/>
    <property type="project" value="UniProtKB-EC"/>
</dbReference>
<dbReference type="GO" id="GO:0031119">
    <property type="term" value="P:tRNA pseudouridine synthesis"/>
    <property type="evidence" value="ECO:0007669"/>
    <property type="project" value="UniProtKB-UniRule"/>
</dbReference>
<dbReference type="CDD" id="cd02570">
    <property type="entry name" value="PseudoU_synth_EcTruA"/>
    <property type="match status" value="1"/>
</dbReference>
<dbReference type="FunFam" id="3.30.70.580:FF:000001">
    <property type="entry name" value="tRNA pseudouridine synthase A"/>
    <property type="match status" value="1"/>
</dbReference>
<dbReference type="Gene3D" id="3.30.70.660">
    <property type="entry name" value="Pseudouridine synthase I, catalytic domain, C-terminal subdomain"/>
    <property type="match status" value="1"/>
</dbReference>
<dbReference type="Gene3D" id="3.30.70.580">
    <property type="entry name" value="Pseudouridine synthase I, catalytic domain, N-terminal subdomain"/>
    <property type="match status" value="1"/>
</dbReference>
<dbReference type="HAMAP" id="MF_00171">
    <property type="entry name" value="TruA"/>
    <property type="match status" value="1"/>
</dbReference>
<dbReference type="InterPro" id="IPR020103">
    <property type="entry name" value="PsdUridine_synth_cat_dom_sf"/>
</dbReference>
<dbReference type="InterPro" id="IPR001406">
    <property type="entry name" value="PsdUridine_synth_TruA"/>
</dbReference>
<dbReference type="InterPro" id="IPR020097">
    <property type="entry name" value="PsdUridine_synth_TruA_a/b_dom"/>
</dbReference>
<dbReference type="InterPro" id="IPR020095">
    <property type="entry name" value="PsdUridine_synth_TruA_C"/>
</dbReference>
<dbReference type="InterPro" id="IPR020094">
    <property type="entry name" value="TruA/RsuA/RluB/E/F_N"/>
</dbReference>
<dbReference type="NCBIfam" id="TIGR00071">
    <property type="entry name" value="hisT_truA"/>
    <property type="match status" value="1"/>
</dbReference>
<dbReference type="PANTHER" id="PTHR11142">
    <property type="entry name" value="PSEUDOURIDYLATE SYNTHASE"/>
    <property type="match status" value="1"/>
</dbReference>
<dbReference type="PANTHER" id="PTHR11142:SF0">
    <property type="entry name" value="TRNA PSEUDOURIDINE SYNTHASE-LIKE 1"/>
    <property type="match status" value="1"/>
</dbReference>
<dbReference type="Pfam" id="PF01416">
    <property type="entry name" value="PseudoU_synth_1"/>
    <property type="match status" value="2"/>
</dbReference>
<dbReference type="PIRSF" id="PIRSF001430">
    <property type="entry name" value="tRNA_psdUrid_synth"/>
    <property type="match status" value="1"/>
</dbReference>
<dbReference type="SUPFAM" id="SSF55120">
    <property type="entry name" value="Pseudouridine synthase"/>
    <property type="match status" value="1"/>
</dbReference>
<protein>
    <recommendedName>
        <fullName evidence="1">tRNA pseudouridine synthase A</fullName>
        <ecNumber evidence="1">5.4.99.12</ecNumber>
    </recommendedName>
    <alternativeName>
        <fullName evidence="1">tRNA pseudouridine(38-40) synthase</fullName>
    </alternativeName>
    <alternativeName>
        <fullName evidence="1">tRNA pseudouridylate synthase I</fullName>
    </alternativeName>
    <alternativeName>
        <fullName evidence="1">tRNA-uridine isomerase I</fullName>
    </alternativeName>
</protein>
<keyword id="KW-0413">Isomerase</keyword>
<keyword id="KW-0819">tRNA processing</keyword>
<feature type="chain" id="PRO_1000017201" description="tRNA pseudouridine synthase A">
    <location>
        <begin position="1"/>
        <end position="248"/>
    </location>
</feature>
<feature type="active site" description="Nucleophile" evidence="1">
    <location>
        <position position="53"/>
    </location>
</feature>
<feature type="binding site" evidence="1">
    <location>
        <position position="111"/>
    </location>
    <ligand>
        <name>substrate</name>
    </ligand>
</feature>
<organism>
    <name type="scientific">Streptococcus thermophilus (strain ATCC BAA-491 / LMD-9)</name>
    <dbReference type="NCBI Taxonomy" id="322159"/>
    <lineage>
        <taxon>Bacteria</taxon>
        <taxon>Bacillati</taxon>
        <taxon>Bacillota</taxon>
        <taxon>Bacilli</taxon>
        <taxon>Lactobacillales</taxon>
        <taxon>Streptococcaceae</taxon>
        <taxon>Streptococcus</taxon>
    </lineage>
</organism>
<proteinExistence type="inferred from homology"/>